<reference key="1">
    <citation type="journal article" date="2007" name="J. Bacteriol.">
        <title>Genome sequence and analysis of the soil cellulolytic actinomycete Thermobifida fusca YX.</title>
        <authorList>
            <person name="Lykidis A."/>
            <person name="Mavromatis K."/>
            <person name="Ivanova N."/>
            <person name="Anderson I."/>
            <person name="Land M."/>
            <person name="DiBartolo G."/>
            <person name="Martinez M."/>
            <person name="Lapidus A."/>
            <person name="Lucas S."/>
            <person name="Copeland A."/>
            <person name="Richardson P."/>
            <person name="Wilson D.B."/>
            <person name="Kyrpides N."/>
        </authorList>
    </citation>
    <scope>NUCLEOTIDE SEQUENCE [LARGE SCALE GENOMIC DNA]</scope>
    <source>
        <strain>YX</strain>
    </source>
</reference>
<dbReference type="EMBL" id="CP000088">
    <property type="protein sequence ID" value="AAZ55842.1"/>
    <property type="molecule type" value="Genomic_DNA"/>
</dbReference>
<dbReference type="SMR" id="Q47NX7"/>
<dbReference type="STRING" id="269800.Tfu_1809"/>
<dbReference type="KEGG" id="tfu:Tfu_1809"/>
<dbReference type="eggNOG" id="COG1222">
    <property type="taxonomic scope" value="Bacteria"/>
</dbReference>
<dbReference type="HOGENOM" id="CLU_036054_0_0_11"/>
<dbReference type="OrthoDB" id="9809379at2"/>
<dbReference type="UniPathway" id="UPA00997"/>
<dbReference type="GO" id="GO:0000502">
    <property type="term" value="C:proteasome complex"/>
    <property type="evidence" value="ECO:0007669"/>
    <property type="project" value="UniProtKB-KW"/>
</dbReference>
<dbReference type="GO" id="GO:0005524">
    <property type="term" value="F:ATP binding"/>
    <property type="evidence" value="ECO:0007669"/>
    <property type="project" value="UniProtKB-UniRule"/>
</dbReference>
<dbReference type="GO" id="GO:0016887">
    <property type="term" value="F:ATP hydrolysis activity"/>
    <property type="evidence" value="ECO:0007669"/>
    <property type="project" value="UniProtKB-UniRule"/>
</dbReference>
<dbReference type="GO" id="GO:0019941">
    <property type="term" value="P:modification-dependent protein catabolic process"/>
    <property type="evidence" value="ECO:0007669"/>
    <property type="project" value="InterPro"/>
</dbReference>
<dbReference type="GO" id="GO:0010498">
    <property type="term" value="P:proteasomal protein catabolic process"/>
    <property type="evidence" value="ECO:0007669"/>
    <property type="project" value="InterPro"/>
</dbReference>
<dbReference type="FunFam" id="3.40.50.300:FF:000155">
    <property type="entry name" value="AAA ATPase forming ring-shaped complexes"/>
    <property type="match status" value="1"/>
</dbReference>
<dbReference type="Gene3D" id="1.10.8.60">
    <property type="match status" value="1"/>
</dbReference>
<dbReference type="Gene3D" id="1.20.5.170">
    <property type="match status" value="1"/>
</dbReference>
<dbReference type="Gene3D" id="2.40.50.140">
    <property type="entry name" value="Nucleic acid-binding proteins"/>
    <property type="match status" value="2"/>
</dbReference>
<dbReference type="Gene3D" id="3.40.50.300">
    <property type="entry name" value="P-loop containing nucleotide triphosphate hydrolases"/>
    <property type="match status" value="1"/>
</dbReference>
<dbReference type="HAMAP" id="MF_02112">
    <property type="entry name" value="ARC_ATPase"/>
    <property type="match status" value="1"/>
</dbReference>
<dbReference type="InterPro" id="IPR003593">
    <property type="entry name" value="AAA+_ATPase"/>
</dbReference>
<dbReference type="InterPro" id="IPR050168">
    <property type="entry name" value="AAA_ATPase_domain"/>
</dbReference>
<dbReference type="InterPro" id="IPR003959">
    <property type="entry name" value="ATPase_AAA_core"/>
</dbReference>
<dbReference type="InterPro" id="IPR003960">
    <property type="entry name" value="ATPase_AAA_CS"/>
</dbReference>
<dbReference type="InterPro" id="IPR012340">
    <property type="entry name" value="NA-bd_OB-fold"/>
</dbReference>
<dbReference type="InterPro" id="IPR027417">
    <property type="entry name" value="P-loop_NTPase"/>
</dbReference>
<dbReference type="InterPro" id="IPR032501">
    <property type="entry name" value="Prot_ATP_ID_OB_2nd"/>
</dbReference>
<dbReference type="InterPro" id="IPR041626">
    <property type="entry name" value="Prot_ATP_ID_OB_N"/>
</dbReference>
<dbReference type="InterPro" id="IPR022482">
    <property type="entry name" value="Proteasome_ATPase"/>
</dbReference>
<dbReference type="NCBIfam" id="TIGR03689">
    <property type="entry name" value="pup_AAA"/>
    <property type="match status" value="1"/>
</dbReference>
<dbReference type="PANTHER" id="PTHR23077">
    <property type="entry name" value="AAA-FAMILY ATPASE"/>
    <property type="match status" value="1"/>
</dbReference>
<dbReference type="PANTHER" id="PTHR23077:SF144">
    <property type="entry name" value="PROTEASOME-ASSOCIATED ATPASE"/>
    <property type="match status" value="1"/>
</dbReference>
<dbReference type="Pfam" id="PF00004">
    <property type="entry name" value="AAA"/>
    <property type="match status" value="1"/>
</dbReference>
<dbReference type="Pfam" id="PF16450">
    <property type="entry name" value="Prot_ATP_ID_OB_C"/>
    <property type="match status" value="1"/>
</dbReference>
<dbReference type="Pfam" id="PF17758">
    <property type="entry name" value="Prot_ATP_ID_OB_N"/>
    <property type="match status" value="1"/>
</dbReference>
<dbReference type="SMART" id="SM00382">
    <property type="entry name" value="AAA"/>
    <property type="match status" value="1"/>
</dbReference>
<dbReference type="SUPFAM" id="SSF52540">
    <property type="entry name" value="P-loop containing nucleoside triphosphate hydrolases"/>
    <property type="match status" value="1"/>
</dbReference>
<dbReference type="PROSITE" id="PS00674">
    <property type="entry name" value="AAA"/>
    <property type="match status" value="1"/>
</dbReference>
<name>ARC_THEFY</name>
<keyword id="KW-0067">ATP-binding</keyword>
<keyword id="KW-0143">Chaperone</keyword>
<keyword id="KW-0175">Coiled coil</keyword>
<keyword id="KW-0547">Nucleotide-binding</keyword>
<keyword id="KW-0647">Proteasome</keyword>
<feature type="chain" id="PRO_0000397027" description="Proteasome-associated ATPase">
    <location>
        <begin position="1"/>
        <end position="584"/>
    </location>
</feature>
<feature type="region of interest" description="Docks into pockets in the proteasome alpha-ring" evidence="1">
    <location>
        <begin position="583"/>
        <end position="584"/>
    </location>
</feature>
<feature type="coiled-coil region" evidence="1">
    <location>
        <begin position="8"/>
        <end position="90"/>
    </location>
</feature>
<feature type="binding site" evidence="1">
    <location>
        <begin position="272"/>
        <end position="277"/>
    </location>
    <ligand>
        <name>ATP</name>
        <dbReference type="ChEBI" id="CHEBI:30616"/>
    </ligand>
</feature>
<gene>
    <name evidence="1" type="primary">arc</name>
    <name type="ordered locus">Tfu_1809</name>
</gene>
<organism>
    <name type="scientific">Thermobifida fusca (strain YX)</name>
    <dbReference type="NCBI Taxonomy" id="269800"/>
    <lineage>
        <taxon>Bacteria</taxon>
        <taxon>Bacillati</taxon>
        <taxon>Actinomycetota</taxon>
        <taxon>Actinomycetes</taxon>
        <taxon>Streptosporangiales</taxon>
        <taxon>Nocardiopsidaceae</taxon>
        <taxon>Thermobifida</taxon>
    </lineage>
</organism>
<proteinExistence type="inferred from homology"/>
<protein>
    <recommendedName>
        <fullName evidence="1">Proteasome-associated ATPase</fullName>
    </recommendedName>
    <alternativeName>
        <fullName evidence="1">AAA ATPase forming ring-shaped complexes</fullName>
        <shortName evidence="1">ARC</shortName>
    </alternativeName>
    <alternativeName>
        <fullName evidence="1">Proteasomal ATPase</fullName>
    </alternativeName>
</protein>
<sequence>MADRDDERHAERDRDELVAQVSYLEKELSVLRRKLADSPRHVRLLEDRLQEAQTALAAANAKNERLVSALKEARDQIVALKEEVDRLSQPPSGFGVFLRARDDGTVEIFTNGRKMRVNVSPSVNVDELRPGQEVMLNEAFNVVEASSYETVGEVVMLKEILEDGERVLVISNHDEERIVRIAEPLRDEPLRAGDSLLLEPRSGYVYERIPKAEVEELILEEVPDISYSDIGGLNGQIEMIRDAVELPYLHKELFREHKLRPPKGVLLYGPPGCGKTLIAKAVANSLAKQVAEKTGRDVGKSFFLNIKGPELLNKYVGETERHIRLVFQRAREKASEGTPVIVFFDEMDSIFRTRGSGVSSDVENTIVPQLLSEIDGVEGLENVIVIGASNREDMIDPAILRPGRLDVKIKIERPDAEAARDIFSKYITPDLPLHPDDLAEHGGSPTATVNAMIQRVVERMYAETEENRFLEVTYANGDKEVLYFKDFNSGAMIQNIVDRAKKMAIKDYLENGSKGLRVSHLLQACVDEFSENEDLPNTTNPDDWARISGKKGERIVYIRTLVSGKKGADAGRSIDTVANTGQYL</sequence>
<evidence type="ECO:0000255" key="1">
    <source>
        <dbReference type="HAMAP-Rule" id="MF_02112"/>
    </source>
</evidence>
<comment type="function">
    <text evidence="1">ATPase which is responsible for recognizing, binding, unfolding and translocation of pupylated proteins into the bacterial 20S proteasome core particle. May be essential for opening the gate of the 20S proteasome via an interaction with its C-terminus, thereby allowing substrate entry and access to the site of proteolysis. Thus, the C-termini of the proteasomal ATPase may function like a 'key in a lock' to induce gate opening and therefore regulate proteolysis.</text>
</comment>
<comment type="pathway">
    <text evidence="1">Protein degradation; proteasomal Pup-dependent pathway.</text>
</comment>
<comment type="subunit">
    <text evidence="1">Homohexamer. Assembles into a hexameric ring structure that caps the 20S proteasome core. Strongly interacts with the prokaryotic ubiquitin-like protein Pup through a hydrophobic interface; the interacting region of ARC lies in its N-terminal coiled-coil domain. There is one Pup binding site per ARC hexamer ring. Upon ATP-binding, the C-terminus of ARC interacts with the alpha-rings of the proteasome core, possibly by binding to the intersubunit pockets.</text>
</comment>
<comment type="domain">
    <text evidence="1">Consists of three main regions, an N-terminal coiled-coil domain that binds to protein Pup and functions as a docking station, an interdomain involved in ARC hexamerization, and a C-terminal ATPase domain of the AAA type.</text>
</comment>
<comment type="similarity">
    <text evidence="1">Belongs to the AAA ATPase family.</text>
</comment>
<accession>Q47NX7</accession>